<proteinExistence type="inferred from homology"/>
<reference key="1">
    <citation type="journal article" date="2002" name="Proc. Natl. Acad. Sci. U.S.A.">
        <title>The genome sequence of the facultative intracellular pathogen Brucella melitensis.</title>
        <authorList>
            <person name="DelVecchio V.G."/>
            <person name="Kapatral V."/>
            <person name="Redkar R.J."/>
            <person name="Patra G."/>
            <person name="Mujer C."/>
            <person name="Los T."/>
            <person name="Ivanova N."/>
            <person name="Anderson I."/>
            <person name="Bhattacharyya A."/>
            <person name="Lykidis A."/>
            <person name="Reznik G."/>
            <person name="Jablonski L."/>
            <person name="Larsen N."/>
            <person name="D'Souza M."/>
            <person name="Bernal A."/>
            <person name="Mazur M."/>
            <person name="Goltsman E."/>
            <person name="Selkov E."/>
            <person name="Elzer P.H."/>
            <person name="Hagius S."/>
            <person name="O'Callaghan D."/>
            <person name="Letesson J.-J."/>
            <person name="Haselkorn R."/>
            <person name="Kyrpides N.C."/>
            <person name="Overbeek R."/>
        </authorList>
    </citation>
    <scope>NUCLEOTIDE SEQUENCE [LARGE SCALE GENOMIC DNA]</scope>
    <source>
        <strain>ATCC 23456 / CCUG 17765 / NCTC 10094 / 16M</strain>
    </source>
</reference>
<feature type="chain" id="PRO_0000199743" description="Homoserine O-acetyltransferase">
    <location>
        <begin position="1"/>
        <end position="306"/>
    </location>
</feature>
<feature type="active site" description="Acyl-thioester intermediate" evidence="1">
    <location>
        <position position="142"/>
    </location>
</feature>
<feature type="active site" description="Proton acceptor" evidence="1">
    <location>
        <position position="235"/>
    </location>
</feature>
<feature type="active site" evidence="1">
    <location>
        <position position="237"/>
    </location>
</feature>
<feature type="binding site" evidence="1">
    <location>
        <position position="163"/>
    </location>
    <ligand>
        <name>substrate</name>
    </ligand>
</feature>
<feature type="binding site" evidence="1">
    <location>
        <position position="192"/>
    </location>
    <ligand>
        <name>substrate</name>
    </ligand>
</feature>
<feature type="binding site" evidence="1">
    <location>
        <position position="249"/>
    </location>
    <ligand>
        <name>substrate</name>
    </ligand>
</feature>
<feature type="site" description="Important for acyl-CoA specificity" evidence="1">
    <location>
        <position position="111"/>
    </location>
</feature>
<feature type="site" description="Important for substrate specificity" evidence="1">
    <location>
        <position position="192"/>
    </location>
</feature>
<evidence type="ECO:0000255" key="1">
    <source>
        <dbReference type="HAMAP-Rule" id="MF_00295"/>
    </source>
</evidence>
<evidence type="ECO:0000305" key="2"/>
<comment type="function">
    <text evidence="1">Transfers an acetyl group from acetyl-CoA to L-homoserine, forming acetyl-L-homoserine.</text>
</comment>
<comment type="catalytic activity">
    <reaction evidence="1">
        <text>L-homoserine + acetyl-CoA = O-acetyl-L-homoserine + CoA</text>
        <dbReference type="Rhea" id="RHEA:13701"/>
        <dbReference type="ChEBI" id="CHEBI:57287"/>
        <dbReference type="ChEBI" id="CHEBI:57288"/>
        <dbReference type="ChEBI" id="CHEBI:57476"/>
        <dbReference type="ChEBI" id="CHEBI:57716"/>
        <dbReference type="EC" id="2.3.1.31"/>
    </reaction>
</comment>
<comment type="pathway">
    <text evidence="1">Amino-acid biosynthesis; L-methionine biosynthesis via de novo pathway; O-acetyl-L-homoserine from L-homoserine: step 1/1.</text>
</comment>
<comment type="subcellular location">
    <subcellularLocation>
        <location evidence="1">Cytoplasm</location>
    </subcellularLocation>
</comment>
<comment type="similarity">
    <text evidence="1">Belongs to the MetA family.</text>
</comment>
<comment type="sequence caution" evidence="2">
    <conflict type="erroneous initiation">
        <sequence resource="EMBL-CDS" id="AAL54023"/>
    </conflict>
</comment>
<organism>
    <name type="scientific">Brucella melitensis biotype 1 (strain ATCC 23456 / CCUG 17765 / NCTC 10094 / 16M)</name>
    <dbReference type="NCBI Taxonomy" id="224914"/>
    <lineage>
        <taxon>Bacteria</taxon>
        <taxon>Pseudomonadati</taxon>
        <taxon>Pseudomonadota</taxon>
        <taxon>Alphaproteobacteria</taxon>
        <taxon>Hyphomicrobiales</taxon>
        <taxon>Brucellaceae</taxon>
        <taxon>Brucella/Ochrobactrum group</taxon>
        <taxon>Brucella</taxon>
    </lineage>
</organism>
<name>METAA_BRUME</name>
<sequence>MPIKIPDDLPATSVLEAEGVMVMREADAVRQDIRPLRIGLLNLMPNKVTTETQIARLLGATPLQVELTLVRMTNHVARHTPADHMLSFYCPWEEVNDQRFDGFVITGAPVERLPFEEVTYWDEMRRVFDWTQSHVHRTLNICWAAQAAVYHFHGMKKYDLPAKASGVFRQRSLVLASPYLRGFSDDFAIPVSRWTEVRKSDIPADSGLKVLVDSTETGLCLLDDPRHRSLHMFNHVEYDTTSLADEYFRDIQVQPEAKVPVNYFPGDDAKRPPENRWRSHAHLLFGNWINEMYQSTPYDIERIGKV</sequence>
<dbReference type="EC" id="2.3.1.31" evidence="1"/>
<dbReference type="EMBL" id="AE008918">
    <property type="protein sequence ID" value="AAL54023.1"/>
    <property type="status" value="ALT_INIT"/>
    <property type="molecule type" value="Genomic_DNA"/>
</dbReference>
<dbReference type="PIR" id="AD3607">
    <property type="entry name" value="AD3607"/>
</dbReference>
<dbReference type="RefSeq" id="WP_004681844.1">
    <property type="nucleotide sequence ID" value="NC_003318.1"/>
</dbReference>
<dbReference type="SMR" id="Q8YBV5"/>
<dbReference type="GeneID" id="29595358"/>
<dbReference type="KEGG" id="bme:BMEII0781"/>
<dbReference type="KEGG" id="bmel:DK63_2466"/>
<dbReference type="PATRIC" id="fig|224914.52.peg.2585"/>
<dbReference type="eggNOG" id="COG1897">
    <property type="taxonomic scope" value="Bacteria"/>
</dbReference>
<dbReference type="PhylomeDB" id="Q8YBV5"/>
<dbReference type="UniPathway" id="UPA00051">
    <property type="reaction ID" value="UER00074"/>
</dbReference>
<dbReference type="Proteomes" id="UP000000419">
    <property type="component" value="Chromosome II"/>
</dbReference>
<dbReference type="GO" id="GO:0005737">
    <property type="term" value="C:cytoplasm"/>
    <property type="evidence" value="ECO:0007669"/>
    <property type="project" value="UniProtKB-SubCell"/>
</dbReference>
<dbReference type="GO" id="GO:0004414">
    <property type="term" value="F:homoserine O-acetyltransferase activity"/>
    <property type="evidence" value="ECO:0007669"/>
    <property type="project" value="UniProtKB-EC"/>
</dbReference>
<dbReference type="GO" id="GO:0008899">
    <property type="term" value="F:homoserine O-succinyltransferase activity"/>
    <property type="evidence" value="ECO:0007669"/>
    <property type="project" value="UniProtKB-UniRule"/>
</dbReference>
<dbReference type="GO" id="GO:0019281">
    <property type="term" value="P:L-methionine biosynthetic process from homoserine via O-succinyl-L-homoserine and cystathionine"/>
    <property type="evidence" value="ECO:0007669"/>
    <property type="project" value="InterPro"/>
</dbReference>
<dbReference type="CDD" id="cd03131">
    <property type="entry name" value="GATase1_HTS"/>
    <property type="match status" value="1"/>
</dbReference>
<dbReference type="Gene3D" id="3.40.50.880">
    <property type="match status" value="1"/>
</dbReference>
<dbReference type="HAMAP" id="MF_00295">
    <property type="entry name" value="MetA_acyltransf"/>
    <property type="match status" value="1"/>
</dbReference>
<dbReference type="InterPro" id="IPR029062">
    <property type="entry name" value="Class_I_gatase-like"/>
</dbReference>
<dbReference type="InterPro" id="IPR005697">
    <property type="entry name" value="HST_MetA"/>
</dbReference>
<dbReference type="InterPro" id="IPR033752">
    <property type="entry name" value="MetA_family"/>
</dbReference>
<dbReference type="NCBIfam" id="TIGR01001">
    <property type="entry name" value="metA"/>
    <property type="match status" value="1"/>
</dbReference>
<dbReference type="PANTHER" id="PTHR20919">
    <property type="entry name" value="HOMOSERINE O-SUCCINYLTRANSFERASE"/>
    <property type="match status" value="1"/>
</dbReference>
<dbReference type="PANTHER" id="PTHR20919:SF0">
    <property type="entry name" value="HOMOSERINE O-SUCCINYLTRANSFERASE"/>
    <property type="match status" value="1"/>
</dbReference>
<dbReference type="Pfam" id="PF04204">
    <property type="entry name" value="HTS"/>
    <property type="match status" value="1"/>
</dbReference>
<dbReference type="PIRSF" id="PIRSF000450">
    <property type="entry name" value="H_ser_succinyltr"/>
    <property type="match status" value="1"/>
</dbReference>
<dbReference type="SUPFAM" id="SSF52317">
    <property type="entry name" value="Class I glutamine amidotransferase-like"/>
    <property type="match status" value="1"/>
</dbReference>
<accession>Q8YBV5</accession>
<gene>
    <name evidence="1" type="primary">metAA</name>
    <name type="synonym">metA</name>
    <name type="ordered locus">BMEII0781</name>
</gene>
<protein>
    <recommendedName>
        <fullName evidence="1">Homoserine O-acetyltransferase</fullName>
        <shortName evidence="1">HAT</shortName>
        <ecNumber evidence="1">2.3.1.31</ecNumber>
    </recommendedName>
    <alternativeName>
        <fullName evidence="1">Homoserine transacetylase</fullName>
        <shortName evidence="1">HTA</shortName>
    </alternativeName>
</protein>
<keyword id="KW-0012">Acyltransferase</keyword>
<keyword id="KW-0028">Amino-acid biosynthesis</keyword>
<keyword id="KW-0963">Cytoplasm</keyword>
<keyword id="KW-0486">Methionine biosynthesis</keyword>
<keyword id="KW-0808">Transferase</keyword>